<organism>
    <name type="scientific">Schizosaccharomyces pombe (strain 972 / ATCC 24843)</name>
    <name type="common">Fission yeast</name>
    <dbReference type="NCBI Taxonomy" id="284812"/>
    <lineage>
        <taxon>Eukaryota</taxon>
        <taxon>Fungi</taxon>
        <taxon>Dikarya</taxon>
        <taxon>Ascomycota</taxon>
        <taxon>Taphrinomycotina</taxon>
        <taxon>Schizosaccharomycetes</taxon>
        <taxon>Schizosaccharomycetales</taxon>
        <taxon>Schizosaccharomycetaceae</taxon>
        <taxon>Schizosaccharomyces</taxon>
    </lineage>
</organism>
<evidence type="ECO:0000250" key="1">
    <source>
        <dbReference type="UniProtKB" id="P53965"/>
    </source>
</evidence>
<evidence type="ECO:0000255" key="2"/>
<evidence type="ECO:0000255" key="3">
    <source>
        <dbReference type="PROSITE-ProRule" id="PRU00160"/>
    </source>
</evidence>
<evidence type="ECO:0000269" key="4">
    <source>
    </source>
</evidence>
<evidence type="ECO:0000269" key="5">
    <source>
    </source>
</evidence>
<evidence type="ECO:0000269" key="6">
    <source>
    </source>
</evidence>
<evidence type="ECO:0000305" key="7"/>
<evidence type="ECO:0000312" key="8">
    <source>
        <dbReference type="PomBase" id="SPBC17A3.03c"/>
    </source>
</evidence>
<dbReference type="EC" id="3.6.1.52" evidence="6"/>
<dbReference type="EMBL" id="AB004537">
    <property type="protein sequence ID" value="BAA21423.1"/>
    <property type="status" value="ALT_SEQ"/>
    <property type="molecule type" value="Genomic_DNA"/>
</dbReference>
<dbReference type="EMBL" id="CU329671">
    <property type="protein sequence ID" value="CAB51762.2"/>
    <property type="molecule type" value="Genomic_DNA"/>
</dbReference>
<dbReference type="PIR" id="T39695">
    <property type="entry name" value="T39695"/>
</dbReference>
<dbReference type="RefSeq" id="NP_595585.2">
    <property type="nucleotide sequence ID" value="NM_001021481.2"/>
</dbReference>
<dbReference type="SMR" id="Q9UUF3"/>
<dbReference type="BioGRID" id="276671">
    <property type="interactions" value="33"/>
</dbReference>
<dbReference type="FunCoup" id="Q9UUF3">
    <property type="interactions" value="240"/>
</dbReference>
<dbReference type="STRING" id="284812.Q9UUF3"/>
<dbReference type="iPTMnet" id="Q9UUF3"/>
<dbReference type="PaxDb" id="4896-SPBC17A3.03c.1"/>
<dbReference type="EnsemblFungi" id="SPBC17A3.03c.1">
    <property type="protein sequence ID" value="SPBC17A3.03c.1:pep"/>
    <property type="gene ID" value="SPBC17A3.03c"/>
</dbReference>
<dbReference type="GeneID" id="2540134"/>
<dbReference type="KEGG" id="spo:2540134"/>
<dbReference type="PomBase" id="SPBC17A3.03c">
    <property type="gene designation" value="siw14"/>
</dbReference>
<dbReference type="VEuPathDB" id="FungiDB:SPBC17A3.03c"/>
<dbReference type="eggNOG" id="KOG1572">
    <property type="taxonomic scope" value="Eukaryota"/>
</dbReference>
<dbReference type="HOGENOM" id="CLU_047845_1_1_1"/>
<dbReference type="InParanoid" id="Q9UUF3"/>
<dbReference type="PRO" id="PR:Q9UUF3"/>
<dbReference type="Proteomes" id="UP000002485">
    <property type="component" value="Chromosome II"/>
</dbReference>
<dbReference type="GO" id="GO:0005737">
    <property type="term" value="C:cytoplasm"/>
    <property type="evidence" value="ECO:0000318"/>
    <property type="project" value="GO_Central"/>
</dbReference>
<dbReference type="GO" id="GO:0005829">
    <property type="term" value="C:cytosol"/>
    <property type="evidence" value="ECO:0007005"/>
    <property type="project" value="PomBase"/>
</dbReference>
<dbReference type="GO" id="GO:0005634">
    <property type="term" value="C:nucleus"/>
    <property type="evidence" value="ECO:0007005"/>
    <property type="project" value="PomBase"/>
</dbReference>
<dbReference type="GO" id="GO:0004309">
    <property type="term" value="F:exopolyphosphatase activity"/>
    <property type="evidence" value="ECO:0000314"/>
    <property type="project" value="PomBase"/>
</dbReference>
<dbReference type="GO" id="GO:0004427">
    <property type="term" value="F:inorganic diphosphate phosphatase activity"/>
    <property type="evidence" value="ECO:0000314"/>
    <property type="project" value="PomBase"/>
</dbReference>
<dbReference type="GO" id="GO:0052840">
    <property type="term" value="F:inositol diphosphate tetrakisphosphate diphosphatase activity"/>
    <property type="evidence" value="ECO:0000318"/>
    <property type="project" value="GO_Central"/>
</dbReference>
<dbReference type="GO" id="GO:0052846">
    <property type="term" value="F:inositol-1,5-bisdiphosphate-2,3,4,6-tetrakisphosphate 1-diphosphatase activity"/>
    <property type="evidence" value="ECO:0000314"/>
    <property type="project" value="PomBase"/>
</dbReference>
<dbReference type="GO" id="GO:0052847">
    <property type="term" value="F:inositol-1,5-bisdiphosphate-2,3,4,6-tetrakisphosphate 5-diphosphatase activity"/>
    <property type="evidence" value="ECO:0000314"/>
    <property type="project" value="PomBase"/>
</dbReference>
<dbReference type="GO" id="GO:0052843">
    <property type="term" value="F:inositol-1-diphosphate-2,3,4,5,6-pentakisphosphate diphosphatase activity"/>
    <property type="evidence" value="ECO:0000314"/>
    <property type="project" value="PomBase"/>
</dbReference>
<dbReference type="GO" id="GO:0052845">
    <property type="term" value="F:inositol-5-diphosphate-1,2,3,4,6-pentakisphosphate diphosphatase activity"/>
    <property type="evidence" value="ECO:0000314"/>
    <property type="project" value="PomBase"/>
</dbReference>
<dbReference type="GO" id="GO:0016791">
    <property type="term" value="F:phosphatase activity"/>
    <property type="evidence" value="ECO:0000318"/>
    <property type="project" value="GO_Central"/>
</dbReference>
<dbReference type="GO" id="GO:0004725">
    <property type="term" value="F:protein tyrosine phosphatase activity"/>
    <property type="evidence" value="ECO:0007669"/>
    <property type="project" value="UniProtKB-EC"/>
</dbReference>
<dbReference type="GO" id="GO:0071543">
    <property type="term" value="P:diphosphoinositol polyphosphate metabolic process"/>
    <property type="evidence" value="ECO:0000266"/>
    <property type="project" value="PomBase"/>
</dbReference>
<dbReference type="CDD" id="cd18538">
    <property type="entry name" value="PFA-DSP_unk"/>
    <property type="match status" value="1"/>
</dbReference>
<dbReference type="FunFam" id="3.90.190.10:FF:000035">
    <property type="entry name" value="Tyrosine phosphatase, putative"/>
    <property type="match status" value="1"/>
</dbReference>
<dbReference type="Gene3D" id="3.90.190.10">
    <property type="entry name" value="Protein tyrosine phosphatase superfamily"/>
    <property type="match status" value="1"/>
</dbReference>
<dbReference type="InterPro" id="IPR029021">
    <property type="entry name" value="Prot-tyrosine_phosphatase-like"/>
</dbReference>
<dbReference type="InterPro" id="IPR004861">
    <property type="entry name" value="Siw14-like"/>
</dbReference>
<dbReference type="InterPro" id="IPR016130">
    <property type="entry name" value="Tyr_Pase_AS"/>
</dbReference>
<dbReference type="InterPro" id="IPR020422">
    <property type="entry name" value="TYR_PHOSPHATASE_DUAL_dom"/>
</dbReference>
<dbReference type="PANTHER" id="PTHR31126:SF48">
    <property type="entry name" value="INOSITOL PHOSPHATASE SIW14"/>
    <property type="match status" value="1"/>
</dbReference>
<dbReference type="PANTHER" id="PTHR31126">
    <property type="entry name" value="TYROSINE-PROTEIN PHOSPHATASE"/>
    <property type="match status" value="1"/>
</dbReference>
<dbReference type="Pfam" id="PF03162">
    <property type="entry name" value="Y_phosphatase2"/>
    <property type="match status" value="1"/>
</dbReference>
<dbReference type="SUPFAM" id="SSF52799">
    <property type="entry name" value="(Phosphotyrosine protein) phosphatases II"/>
    <property type="match status" value="1"/>
</dbReference>
<dbReference type="PROSITE" id="PS00383">
    <property type="entry name" value="TYR_PHOSPHATASE_1"/>
    <property type="match status" value="1"/>
</dbReference>
<dbReference type="PROSITE" id="PS50054">
    <property type="entry name" value="TYR_PHOSPHATASE_DUAL"/>
    <property type="match status" value="1"/>
</dbReference>
<sequence>MAIVFPFQLEKKLISITSDRDQISMSIPEVSSHDSCLNDCHSVNSEEQAKPVCCLELNAHKDGIKVVDTSNDASTFSNSPLVPDNFGVVYPGIIYRSACPRASNFNFLESLHIRTIISLRQEEYSEEDLHYFTKHHINYYHIAMPGSKHRKNDCISSSSNPDISDVDDLVRKTLQLLLNKENWPVLLHCSRGKHRTGIVIGCLRALMNWPVGNRLQEYISFSHPKEREVDEEYIQNFSSDPSLKSSLNDLKRYISDSSSELADVVLSSESPTVQAATVNETCRSPGS</sequence>
<gene>
    <name evidence="8" type="primary">siw14</name>
    <name type="ORF">pi043</name>
    <name evidence="8" type="ORF">SPBC17A3.03c</name>
</gene>
<reference key="1">
    <citation type="journal article" date="2000" name="Yeast">
        <title>A 38 kb segment containing the cdc2 gene from the left arm of fission yeast chromosome II: sequence analysis and characterization of the genomic DNA and cDNAs encoded on the segment.</title>
        <authorList>
            <person name="Machida M."/>
            <person name="Yamazaki S."/>
            <person name="Kunihiro S."/>
            <person name="Tanaka T."/>
            <person name="Kushida N."/>
            <person name="Jinno K."/>
            <person name="Haikawa Y."/>
            <person name="Yamazaki J."/>
            <person name="Yamamoto S."/>
            <person name="Sekine M."/>
            <person name="Oguchi A."/>
            <person name="Nagai Y."/>
            <person name="Sakai M."/>
            <person name="Aoki K."/>
            <person name="Ogura K."/>
            <person name="Kudoh Y."/>
            <person name="Kikuchi H."/>
            <person name="Zhang M.Q."/>
            <person name="Yanagida M."/>
        </authorList>
    </citation>
    <scope>NUCLEOTIDE SEQUENCE [LARGE SCALE GENOMIC DNA]</scope>
    <source>
        <strain>972 / ATCC 24843</strain>
    </source>
</reference>
<reference key="2">
    <citation type="journal article" date="2002" name="Nature">
        <title>The genome sequence of Schizosaccharomyces pombe.</title>
        <authorList>
            <person name="Wood V."/>
            <person name="Gwilliam R."/>
            <person name="Rajandream M.A."/>
            <person name="Lyne M.H."/>
            <person name="Lyne R."/>
            <person name="Stewart A."/>
            <person name="Sgouros J.G."/>
            <person name="Peat N."/>
            <person name="Hayles J."/>
            <person name="Baker S.G."/>
            <person name="Basham D."/>
            <person name="Bowman S."/>
            <person name="Brooks K."/>
            <person name="Brown D."/>
            <person name="Brown S."/>
            <person name="Chillingworth T."/>
            <person name="Churcher C.M."/>
            <person name="Collins M."/>
            <person name="Connor R."/>
            <person name="Cronin A."/>
            <person name="Davis P."/>
            <person name="Feltwell T."/>
            <person name="Fraser A."/>
            <person name="Gentles S."/>
            <person name="Goble A."/>
            <person name="Hamlin N."/>
            <person name="Harris D.E."/>
            <person name="Hidalgo J."/>
            <person name="Hodgson G."/>
            <person name="Holroyd S."/>
            <person name="Hornsby T."/>
            <person name="Howarth S."/>
            <person name="Huckle E.J."/>
            <person name="Hunt S."/>
            <person name="Jagels K."/>
            <person name="James K.D."/>
            <person name="Jones L."/>
            <person name="Jones M."/>
            <person name="Leather S."/>
            <person name="McDonald S."/>
            <person name="McLean J."/>
            <person name="Mooney P."/>
            <person name="Moule S."/>
            <person name="Mungall K.L."/>
            <person name="Murphy L.D."/>
            <person name="Niblett D."/>
            <person name="Odell C."/>
            <person name="Oliver K."/>
            <person name="O'Neil S."/>
            <person name="Pearson D."/>
            <person name="Quail M.A."/>
            <person name="Rabbinowitsch E."/>
            <person name="Rutherford K.M."/>
            <person name="Rutter S."/>
            <person name="Saunders D."/>
            <person name="Seeger K."/>
            <person name="Sharp S."/>
            <person name="Skelton J."/>
            <person name="Simmonds M.N."/>
            <person name="Squares R."/>
            <person name="Squares S."/>
            <person name="Stevens K."/>
            <person name="Taylor K."/>
            <person name="Taylor R.G."/>
            <person name="Tivey A."/>
            <person name="Walsh S.V."/>
            <person name="Warren T."/>
            <person name="Whitehead S."/>
            <person name="Woodward J.R."/>
            <person name="Volckaert G."/>
            <person name="Aert R."/>
            <person name="Robben J."/>
            <person name="Grymonprez B."/>
            <person name="Weltjens I."/>
            <person name="Vanstreels E."/>
            <person name="Rieger M."/>
            <person name="Schaefer M."/>
            <person name="Mueller-Auer S."/>
            <person name="Gabel C."/>
            <person name="Fuchs M."/>
            <person name="Duesterhoeft A."/>
            <person name="Fritzc C."/>
            <person name="Holzer E."/>
            <person name="Moestl D."/>
            <person name="Hilbert H."/>
            <person name="Borzym K."/>
            <person name="Langer I."/>
            <person name="Beck A."/>
            <person name="Lehrach H."/>
            <person name="Reinhardt R."/>
            <person name="Pohl T.M."/>
            <person name="Eger P."/>
            <person name="Zimmermann W."/>
            <person name="Wedler H."/>
            <person name="Wambutt R."/>
            <person name="Purnelle B."/>
            <person name="Goffeau A."/>
            <person name="Cadieu E."/>
            <person name="Dreano S."/>
            <person name="Gloux S."/>
            <person name="Lelaure V."/>
            <person name="Mottier S."/>
            <person name="Galibert F."/>
            <person name="Aves S.J."/>
            <person name="Xiang Z."/>
            <person name="Hunt C."/>
            <person name="Moore K."/>
            <person name="Hurst S.M."/>
            <person name="Lucas M."/>
            <person name="Rochet M."/>
            <person name="Gaillardin C."/>
            <person name="Tallada V.A."/>
            <person name="Garzon A."/>
            <person name="Thode G."/>
            <person name="Daga R.R."/>
            <person name="Cruzado L."/>
            <person name="Jimenez J."/>
            <person name="Sanchez M."/>
            <person name="del Rey F."/>
            <person name="Benito J."/>
            <person name="Dominguez A."/>
            <person name="Revuelta J.L."/>
            <person name="Moreno S."/>
            <person name="Armstrong J."/>
            <person name="Forsburg S.L."/>
            <person name="Cerutti L."/>
            <person name="Lowe T."/>
            <person name="McCombie W.R."/>
            <person name="Paulsen I."/>
            <person name="Potashkin J."/>
            <person name="Shpakovski G.V."/>
            <person name="Ussery D."/>
            <person name="Barrell B.G."/>
            <person name="Nurse P."/>
        </authorList>
    </citation>
    <scope>NUCLEOTIDE SEQUENCE [LARGE SCALE GENOMIC DNA]</scope>
    <source>
        <strain>972 / ATCC 24843</strain>
    </source>
</reference>
<reference key="3">
    <citation type="journal article" date="2011" name="Science">
        <title>Comparative functional genomics of the fission yeasts.</title>
        <authorList>
            <person name="Rhind N."/>
            <person name="Chen Z."/>
            <person name="Yassour M."/>
            <person name="Thompson D.A."/>
            <person name="Haas B.J."/>
            <person name="Habib N."/>
            <person name="Wapinski I."/>
            <person name="Roy S."/>
            <person name="Lin M.F."/>
            <person name="Heiman D.I."/>
            <person name="Young S.K."/>
            <person name="Furuya K."/>
            <person name="Guo Y."/>
            <person name="Pidoux A."/>
            <person name="Chen H.M."/>
            <person name="Robbertse B."/>
            <person name="Goldberg J.M."/>
            <person name="Aoki K."/>
            <person name="Bayne E.H."/>
            <person name="Berlin A.M."/>
            <person name="Desjardins C.A."/>
            <person name="Dobbs E."/>
            <person name="Dukaj L."/>
            <person name="Fan L."/>
            <person name="FitzGerald M.G."/>
            <person name="French C."/>
            <person name="Gujja S."/>
            <person name="Hansen K."/>
            <person name="Keifenheim D."/>
            <person name="Levin J.Z."/>
            <person name="Mosher R.A."/>
            <person name="Mueller C.A."/>
            <person name="Pfiffner J."/>
            <person name="Priest M."/>
            <person name="Russ C."/>
            <person name="Smialowska A."/>
            <person name="Swoboda P."/>
            <person name="Sykes S.M."/>
            <person name="Vaughn M."/>
            <person name="Vengrova S."/>
            <person name="Yoder R."/>
            <person name="Zeng Q."/>
            <person name="Allshire R."/>
            <person name="Baulcombe D."/>
            <person name="Birren B.W."/>
            <person name="Brown W."/>
            <person name="Ekwall K."/>
            <person name="Kellis M."/>
            <person name="Leatherwood J."/>
            <person name="Levin H."/>
            <person name="Margalit H."/>
            <person name="Martienssen R."/>
            <person name="Nieduszynski C.A."/>
            <person name="Spatafora J.W."/>
            <person name="Friedman N."/>
            <person name="Dalgaard J.Z."/>
            <person name="Baumann P."/>
            <person name="Niki H."/>
            <person name="Regev A."/>
            <person name="Nusbaum C."/>
        </authorList>
    </citation>
    <scope>REVISION OF GENE MODEL</scope>
</reference>
<reference key="4">
    <citation type="journal article" date="2006" name="Nat. Biotechnol.">
        <title>ORFeome cloning and global analysis of protein localization in the fission yeast Schizosaccharomyces pombe.</title>
        <authorList>
            <person name="Matsuyama A."/>
            <person name="Arai R."/>
            <person name="Yashiroda Y."/>
            <person name="Shirai A."/>
            <person name="Kamata A."/>
            <person name="Sekido S."/>
            <person name="Kobayashi Y."/>
            <person name="Hashimoto A."/>
            <person name="Hamamoto M."/>
            <person name="Hiraoka Y."/>
            <person name="Horinouchi S."/>
            <person name="Yoshida M."/>
        </authorList>
    </citation>
    <scope>SUBCELLULAR LOCATION [LARGE SCALE ANALYSIS]</scope>
</reference>
<reference key="5">
    <citation type="journal article" date="2008" name="J. Proteome Res.">
        <title>Phosphoproteome analysis of fission yeast.</title>
        <authorList>
            <person name="Wilson-Grady J.T."/>
            <person name="Villen J."/>
            <person name="Gygi S.P."/>
        </authorList>
    </citation>
    <scope>PHOSPHORYLATION [LARGE SCALE ANALYSIS] AT SER-156 AND SER-159</scope>
    <scope>IDENTIFICATION BY MASS SPECTROMETRY</scope>
</reference>
<reference key="6">
    <citation type="journal article" date="2023" name="MBio">
        <title>Activities, substrate specificity, and genetic interactions of fission yeast Siw14, a cysteinyl-phosphatase-type inositol pyrophosphatase.</title>
        <authorList>
            <person name="Sanchez A.M."/>
            <person name="Schwer B."/>
            <person name="Jork N."/>
            <person name="Jessen H.J."/>
            <person name="Shuman S."/>
        </authorList>
    </citation>
    <scope>FUNCTION</scope>
    <scope>CATALYTIC ACTIVITY</scope>
    <scope>ACTIVITY REGULATION</scope>
    <scope>BIOPHYSICOCHEMICAL PROPERTIES</scope>
    <scope>DISRUPTION PHENOTYPE</scope>
    <scope>MUTAGENESIS OF CYS-189</scope>
</reference>
<accession>Q9UUF3</accession>
<accession>O13635</accession>
<comment type="function">
    <text evidence="6">Cleaves the beta-phosphate at the 1- and 5-position of soluble inositol pyrophosphates (PubMed:37772819). Has exopolyphosphatase activity in vitro but does not appear to contribute to the homeostasis of cellular polyphosphate (PubMed:37772819).</text>
</comment>
<comment type="catalytic activity">
    <reaction evidence="6">
        <text>5-diphospho-1D-myo-inositol 1,2,3,4,6-pentakisphosphate + H2O = 1D-myo-inositol hexakisphosphate + phosphate + H(+)</text>
        <dbReference type="Rhea" id="RHEA:22384"/>
        <dbReference type="ChEBI" id="CHEBI:15377"/>
        <dbReference type="ChEBI" id="CHEBI:15378"/>
        <dbReference type="ChEBI" id="CHEBI:43474"/>
        <dbReference type="ChEBI" id="CHEBI:58130"/>
        <dbReference type="ChEBI" id="CHEBI:58628"/>
        <dbReference type="EC" id="3.6.1.52"/>
    </reaction>
    <physiologicalReaction direction="left-to-right" evidence="6">
        <dbReference type="Rhea" id="RHEA:22385"/>
    </physiologicalReaction>
</comment>
<comment type="catalytic activity">
    <reaction evidence="6">
        <text>1-diphospho-1D-myo-inositol 2,3,4,5,6-pentakisphosphate + H2O = 1D-myo-inositol hexakisphosphate + phosphate + H(+)</text>
        <dbReference type="Rhea" id="RHEA:79723"/>
        <dbReference type="ChEBI" id="CHEBI:15377"/>
        <dbReference type="ChEBI" id="CHEBI:15378"/>
        <dbReference type="ChEBI" id="CHEBI:43474"/>
        <dbReference type="ChEBI" id="CHEBI:58130"/>
        <dbReference type="ChEBI" id="CHEBI:74946"/>
    </reaction>
    <physiologicalReaction direction="left-to-right" evidence="6">
        <dbReference type="Rhea" id="RHEA:79724"/>
    </physiologicalReaction>
</comment>
<comment type="catalytic activity">
    <reaction evidence="6">
        <text>1,5-bis(diphospho)-1D-myo-inositol 2,3,4,6-tetrakisphosphate + H2O = 1-diphospho-1D-myo-inositol 2,3,4,5,6-pentakisphosphate + phosphate + 2 H(+)</text>
        <dbReference type="Rhea" id="RHEA:79699"/>
        <dbReference type="ChEBI" id="CHEBI:15377"/>
        <dbReference type="ChEBI" id="CHEBI:15378"/>
        <dbReference type="ChEBI" id="CHEBI:43474"/>
        <dbReference type="ChEBI" id="CHEBI:74946"/>
        <dbReference type="ChEBI" id="CHEBI:77983"/>
        <dbReference type="EC" id="3.6.1.52"/>
    </reaction>
    <physiologicalReaction direction="left-to-right" evidence="6">
        <dbReference type="Rhea" id="RHEA:79700"/>
    </physiologicalReaction>
</comment>
<comment type="activity regulation">
    <text evidence="6">Activity is inhibited by the reaction product inorganic phosphate and by sulfate (a phosphate mimetic) (PubMed:37772819). Not inhibited by magnesium (PubMed:37772819).</text>
</comment>
<comment type="biophysicochemical properties">
    <kinetics>
        <KM evidence="6">1.13 mM for inorganic diphosphate (pyrophosphate) (at 37 degrees Celsius and at pH 5)</KM>
        <KM evidence="6">1.64 mM for p-nitrophenylphosphate (at 37 degrees Celsius and at pH 5)</KM>
        <text evidence="6">kcat is 0.44 sec(-1) with inorganic diphosphate (pyrophosphate) as substrate (at 37 degrees Celsius and at pH 5) (PubMed:37772819). kcat is 1.24 sec(-1) with p-nitrophenylphosphate as substrate (at 37 degrees Celsius and at pH 5) (PubMed:37772819).</text>
    </kinetics>
    <phDependence>
        <text evidence="6">Optimum pH is 4.5 to 5.</text>
    </phDependence>
</comment>
<comment type="subcellular location">
    <subcellularLocation>
        <location evidence="4">Cytoplasm</location>
    </subcellularLocation>
    <subcellularLocation>
        <location evidence="4">Nucleus</location>
    </subcellularLocation>
</comment>
<comment type="disruption phenotype">
    <text evidence="6">No effect on the level or length of linear polyphosphates in cells (PubMed:37772819). No effect on cell population growth at low, mid or high temperature (PubMed:37772819). Double knockout of aps1 and siw14 is lethal; the effect is suppressed by knockout of genes involved in mRNA 3'-end processing/termination (PubMed:37772819).</text>
</comment>
<comment type="similarity">
    <text evidence="2">Belongs to the protein-tyrosine phosphatase family. Atypical dual-specificity phosphatase Siw14-like subfamily.</text>
</comment>
<comment type="sequence caution" evidence="7">
    <conflict type="erroneous gene model prediction">
        <sequence resource="EMBL-CDS" id="BAA21423"/>
    </conflict>
</comment>
<protein>
    <recommendedName>
        <fullName evidence="7">Inositol diphosphatase siw14</fullName>
        <ecNumber evidence="6">3.6.1.52</ecNumber>
    </recommendedName>
    <alternativeName>
        <fullName evidence="7">Inositol pyrophosphate phosphatase siw14</fullName>
    </alternativeName>
</protein>
<keyword id="KW-0963">Cytoplasm</keyword>
<keyword id="KW-0378">Hydrolase</keyword>
<keyword id="KW-0539">Nucleus</keyword>
<keyword id="KW-0597">Phosphoprotein</keyword>
<keyword id="KW-1185">Reference proteome</keyword>
<feature type="chain" id="PRO_0000315935" description="Inositol diphosphatase siw14">
    <location>
        <begin position="1"/>
        <end position="287"/>
    </location>
</feature>
<feature type="domain" description="Tyrosine-protein phosphatase" evidence="3">
    <location>
        <begin position="85"/>
        <end position="256"/>
    </location>
</feature>
<feature type="active site" description="Phosphocysteine intermediate" evidence="3">
    <location>
        <position position="189"/>
    </location>
</feature>
<feature type="site" description="Transition state stabilizer" evidence="1">
    <location>
        <position position="195"/>
    </location>
</feature>
<feature type="modified residue" description="Phosphoserine" evidence="5">
    <location>
        <position position="156"/>
    </location>
</feature>
<feature type="modified residue" description="Phosphoserine" evidence="5">
    <location>
        <position position="159"/>
    </location>
</feature>
<feature type="mutagenesis site" description="Abolishes enzyme activity." evidence="6">
    <original>C</original>
    <variation>S</variation>
    <location>
        <position position="189"/>
    </location>
</feature>
<name>SIW14_SCHPO</name>
<proteinExistence type="evidence at protein level"/>